<evidence type="ECO:0000255" key="1">
    <source>
        <dbReference type="HAMAP-Rule" id="MF_00104"/>
    </source>
</evidence>
<proteinExistence type="inferred from homology"/>
<dbReference type="EC" id="3.1.26.3" evidence="1"/>
<dbReference type="EMBL" id="AE016826">
    <property type="protein sequence ID" value="AAO26966.1"/>
    <property type="molecule type" value="Genomic_DNA"/>
</dbReference>
<dbReference type="RefSeq" id="WP_011091367.1">
    <property type="nucleotide sequence ID" value="NC_004545.1"/>
</dbReference>
<dbReference type="SMR" id="P59476"/>
<dbReference type="STRING" id="224915.bbp_239"/>
<dbReference type="KEGG" id="bab:bbp_239"/>
<dbReference type="eggNOG" id="COG0571">
    <property type="taxonomic scope" value="Bacteria"/>
</dbReference>
<dbReference type="HOGENOM" id="CLU_000907_1_1_6"/>
<dbReference type="OrthoDB" id="9805026at2"/>
<dbReference type="Proteomes" id="UP000000601">
    <property type="component" value="Chromosome"/>
</dbReference>
<dbReference type="GO" id="GO:0005737">
    <property type="term" value="C:cytoplasm"/>
    <property type="evidence" value="ECO:0007669"/>
    <property type="project" value="UniProtKB-SubCell"/>
</dbReference>
<dbReference type="GO" id="GO:0003725">
    <property type="term" value="F:double-stranded RNA binding"/>
    <property type="evidence" value="ECO:0007669"/>
    <property type="project" value="TreeGrafter"/>
</dbReference>
<dbReference type="GO" id="GO:0046872">
    <property type="term" value="F:metal ion binding"/>
    <property type="evidence" value="ECO:0007669"/>
    <property type="project" value="UniProtKB-KW"/>
</dbReference>
<dbReference type="GO" id="GO:0004525">
    <property type="term" value="F:ribonuclease III activity"/>
    <property type="evidence" value="ECO:0007669"/>
    <property type="project" value="UniProtKB-UniRule"/>
</dbReference>
<dbReference type="GO" id="GO:0019843">
    <property type="term" value="F:rRNA binding"/>
    <property type="evidence" value="ECO:0007669"/>
    <property type="project" value="UniProtKB-KW"/>
</dbReference>
<dbReference type="GO" id="GO:0006397">
    <property type="term" value="P:mRNA processing"/>
    <property type="evidence" value="ECO:0007669"/>
    <property type="project" value="UniProtKB-UniRule"/>
</dbReference>
<dbReference type="GO" id="GO:0010468">
    <property type="term" value="P:regulation of gene expression"/>
    <property type="evidence" value="ECO:0007669"/>
    <property type="project" value="TreeGrafter"/>
</dbReference>
<dbReference type="GO" id="GO:0006364">
    <property type="term" value="P:rRNA processing"/>
    <property type="evidence" value="ECO:0007669"/>
    <property type="project" value="UniProtKB-UniRule"/>
</dbReference>
<dbReference type="GO" id="GO:0008033">
    <property type="term" value="P:tRNA processing"/>
    <property type="evidence" value="ECO:0007669"/>
    <property type="project" value="UniProtKB-KW"/>
</dbReference>
<dbReference type="CDD" id="cd10845">
    <property type="entry name" value="DSRM_RNAse_III_family"/>
    <property type="match status" value="1"/>
</dbReference>
<dbReference type="CDD" id="cd00593">
    <property type="entry name" value="RIBOc"/>
    <property type="match status" value="1"/>
</dbReference>
<dbReference type="FunFam" id="1.10.1520.10:FF:000001">
    <property type="entry name" value="Ribonuclease 3"/>
    <property type="match status" value="1"/>
</dbReference>
<dbReference type="FunFam" id="3.30.160.20:FF:000003">
    <property type="entry name" value="Ribonuclease 3"/>
    <property type="match status" value="1"/>
</dbReference>
<dbReference type="Gene3D" id="3.30.160.20">
    <property type="match status" value="1"/>
</dbReference>
<dbReference type="Gene3D" id="1.10.1520.10">
    <property type="entry name" value="Ribonuclease III domain"/>
    <property type="match status" value="1"/>
</dbReference>
<dbReference type="HAMAP" id="MF_00104">
    <property type="entry name" value="RNase_III"/>
    <property type="match status" value="1"/>
</dbReference>
<dbReference type="InterPro" id="IPR014720">
    <property type="entry name" value="dsRBD_dom"/>
</dbReference>
<dbReference type="InterPro" id="IPR011907">
    <property type="entry name" value="RNase_III"/>
</dbReference>
<dbReference type="InterPro" id="IPR000999">
    <property type="entry name" value="RNase_III_dom"/>
</dbReference>
<dbReference type="InterPro" id="IPR036389">
    <property type="entry name" value="RNase_III_sf"/>
</dbReference>
<dbReference type="NCBIfam" id="TIGR02191">
    <property type="entry name" value="RNaseIII"/>
    <property type="match status" value="1"/>
</dbReference>
<dbReference type="PANTHER" id="PTHR11207:SF0">
    <property type="entry name" value="RIBONUCLEASE 3"/>
    <property type="match status" value="1"/>
</dbReference>
<dbReference type="PANTHER" id="PTHR11207">
    <property type="entry name" value="RIBONUCLEASE III"/>
    <property type="match status" value="1"/>
</dbReference>
<dbReference type="Pfam" id="PF00035">
    <property type="entry name" value="dsrm"/>
    <property type="match status" value="1"/>
</dbReference>
<dbReference type="Pfam" id="PF14622">
    <property type="entry name" value="Ribonucleas_3_3"/>
    <property type="match status" value="1"/>
</dbReference>
<dbReference type="SMART" id="SM00358">
    <property type="entry name" value="DSRM"/>
    <property type="match status" value="1"/>
</dbReference>
<dbReference type="SMART" id="SM00535">
    <property type="entry name" value="RIBOc"/>
    <property type="match status" value="1"/>
</dbReference>
<dbReference type="SUPFAM" id="SSF54768">
    <property type="entry name" value="dsRNA-binding domain-like"/>
    <property type="match status" value="1"/>
</dbReference>
<dbReference type="SUPFAM" id="SSF69065">
    <property type="entry name" value="RNase III domain-like"/>
    <property type="match status" value="1"/>
</dbReference>
<dbReference type="PROSITE" id="PS50137">
    <property type="entry name" value="DS_RBD"/>
    <property type="match status" value="1"/>
</dbReference>
<dbReference type="PROSITE" id="PS00517">
    <property type="entry name" value="RNASE_3_1"/>
    <property type="match status" value="1"/>
</dbReference>
<dbReference type="PROSITE" id="PS50142">
    <property type="entry name" value="RNASE_3_2"/>
    <property type="match status" value="1"/>
</dbReference>
<organism>
    <name type="scientific">Buchnera aphidicola subsp. Baizongia pistaciae (strain Bp)</name>
    <dbReference type="NCBI Taxonomy" id="224915"/>
    <lineage>
        <taxon>Bacteria</taxon>
        <taxon>Pseudomonadati</taxon>
        <taxon>Pseudomonadota</taxon>
        <taxon>Gammaproteobacteria</taxon>
        <taxon>Enterobacterales</taxon>
        <taxon>Erwiniaceae</taxon>
        <taxon>Buchnera</taxon>
    </lineage>
</organism>
<protein>
    <recommendedName>
        <fullName evidence="1">Ribonuclease 3</fullName>
        <ecNumber evidence="1">3.1.26.3</ecNumber>
    </recommendedName>
    <alternativeName>
        <fullName evidence="1">Ribonuclease III</fullName>
        <shortName evidence="1">RNase III</shortName>
    </alternativeName>
</protein>
<accession>P59476</accession>
<comment type="function">
    <text evidence="1">Digests double-stranded RNA. Involved in the processing of primary rRNA transcript to yield the immediate precursors to the large and small rRNAs (23S and 16S). Processes some mRNAs, and tRNAs when they are encoded in the rRNA operon. Processes pre-crRNA and tracrRNA of type II CRISPR loci if present in the organism.</text>
</comment>
<comment type="catalytic activity">
    <reaction evidence="1">
        <text>Endonucleolytic cleavage to 5'-phosphomonoester.</text>
        <dbReference type="EC" id="3.1.26.3"/>
    </reaction>
</comment>
<comment type="cofactor">
    <cofactor evidence="1">
        <name>Mg(2+)</name>
        <dbReference type="ChEBI" id="CHEBI:18420"/>
    </cofactor>
</comment>
<comment type="subunit">
    <text evidence="1">Homodimer.</text>
</comment>
<comment type="subcellular location">
    <subcellularLocation>
        <location evidence="1">Cytoplasm</location>
    </subcellularLocation>
</comment>
<comment type="similarity">
    <text evidence="1">Belongs to the ribonuclease III family.</text>
</comment>
<sequence length="226" mass="25644">MNHTVIQKLQKILGYTFIKKDLLIQALTHRSANSKHNERLEFLGDSILSFVIANALYHCFPHVNEGDMSRMRATLVRGHTLAKIAYEFDLGDYLQLGQGELKSGGFRRESILANTVEALIGSIFLDSNLKTIEKLILKWYKNRLKAINPSDTQKDPKTRLQEYLQSKHLPLPSYLVEQVYGEAHNQLFTIYCEISGINEKTIGIGSSRRKAEQEAAQNALIKLGIE</sequence>
<gene>
    <name evidence="1" type="primary">rnc</name>
    <name type="ordered locus">bbp_239</name>
</gene>
<reference key="1">
    <citation type="journal article" date="2003" name="Proc. Natl. Acad. Sci. U.S.A.">
        <title>Reductive genome evolution in Buchnera aphidicola.</title>
        <authorList>
            <person name="van Ham R.C.H.J."/>
            <person name="Kamerbeek J."/>
            <person name="Palacios C."/>
            <person name="Rausell C."/>
            <person name="Abascal F."/>
            <person name="Bastolla U."/>
            <person name="Fernandez J.M."/>
            <person name="Jimenez L."/>
            <person name="Postigo M."/>
            <person name="Silva F.J."/>
            <person name="Tamames J."/>
            <person name="Viguera E."/>
            <person name="Latorre A."/>
            <person name="Valencia A."/>
            <person name="Moran F."/>
            <person name="Moya A."/>
        </authorList>
    </citation>
    <scope>NUCLEOTIDE SEQUENCE [LARGE SCALE GENOMIC DNA]</scope>
    <source>
        <strain>Bp</strain>
    </source>
</reference>
<name>RNC_BUCBP</name>
<feature type="chain" id="PRO_0000180382" description="Ribonuclease 3">
    <location>
        <begin position="1"/>
        <end position="226"/>
    </location>
</feature>
<feature type="domain" description="RNase III" evidence="1">
    <location>
        <begin position="6"/>
        <end position="128"/>
    </location>
</feature>
<feature type="domain" description="DRBM" evidence="1">
    <location>
        <begin position="155"/>
        <end position="225"/>
    </location>
</feature>
<feature type="active site" evidence="1">
    <location>
        <position position="45"/>
    </location>
</feature>
<feature type="active site" evidence="1">
    <location>
        <position position="117"/>
    </location>
</feature>
<feature type="binding site" evidence="1">
    <location>
        <position position="41"/>
    </location>
    <ligand>
        <name>Mg(2+)</name>
        <dbReference type="ChEBI" id="CHEBI:18420"/>
    </ligand>
</feature>
<feature type="binding site" evidence="1">
    <location>
        <position position="114"/>
    </location>
    <ligand>
        <name>Mg(2+)</name>
        <dbReference type="ChEBI" id="CHEBI:18420"/>
    </ligand>
</feature>
<feature type="binding site" evidence="1">
    <location>
        <position position="117"/>
    </location>
    <ligand>
        <name>Mg(2+)</name>
        <dbReference type="ChEBI" id="CHEBI:18420"/>
    </ligand>
</feature>
<keyword id="KW-0963">Cytoplasm</keyword>
<keyword id="KW-0255">Endonuclease</keyword>
<keyword id="KW-0378">Hydrolase</keyword>
<keyword id="KW-0460">Magnesium</keyword>
<keyword id="KW-0479">Metal-binding</keyword>
<keyword id="KW-0507">mRNA processing</keyword>
<keyword id="KW-0540">Nuclease</keyword>
<keyword id="KW-1185">Reference proteome</keyword>
<keyword id="KW-0694">RNA-binding</keyword>
<keyword id="KW-0698">rRNA processing</keyword>
<keyword id="KW-0699">rRNA-binding</keyword>
<keyword id="KW-0819">tRNA processing</keyword>